<comment type="function">
    <text evidence="2">Catalyzes the phosphorylation of D-fructose 6-phosphate to fructose 1,6-bisphosphate by ATP, the first committing step of glycolysis.</text>
</comment>
<comment type="catalytic activity">
    <reaction evidence="2">
        <text>beta-D-fructose 6-phosphate + ATP = beta-D-fructose 1,6-bisphosphate + ADP + H(+)</text>
        <dbReference type="Rhea" id="RHEA:16109"/>
        <dbReference type="ChEBI" id="CHEBI:15378"/>
        <dbReference type="ChEBI" id="CHEBI:30616"/>
        <dbReference type="ChEBI" id="CHEBI:32966"/>
        <dbReference type="ChEBI" id="CHEBI:57634"/>
        <dbReference type="ChEBI" id="CHEBI:456216"/>
        <dbReference type="EC" id="2.7.1.11"/>
    </reaction>
</comment>
<comment type="cofactor">
    <cofactor evidence="1">
        <name>Mg(2+)</name>
        <dbReference type="ChEBI" id="CHEBI:18420"/>
    </cofactor>
</comment>
<comment type="activity regulation">
    <text evidence="2">In contrast with PFK1 this enzyme is not affected by phosphoenolpyruvate.</text>
</comment>
<comment type="pathway">
    <text evidence="1">Carbohydrate degradation; glycolysis; D-glyceraldehyde 3-phosphate and glycerone phosphate from D-glucose: step 3/4.</text>
</comment>
<comment type="subunit">
    <text evidence="2">Homotetramer.</text>
</comment>
<comment type="subcellular location">
    <subcellularLocation>
        <location evidence="1">Cytoplasm</location>
    </subcellularLocation>
</comment>
<comment type="similarity">
    <text evidence="3">Belongs to the phosphofructokinase type A (PFKA) family. ATP-dependent PFK group I subfamily. Prokaryotic clade 'B1' sub-subfamily.</text>
</comment>
<organism>
    <name type="scientific">Thermus thermophilus (strain ATCC 27634 / DSM 579 / HB8)</name>
    <dbReference type="NCBI Taxonomy" id="300852"/>
    <lineage>
        <taxon>Bacteria</taxon>
        <taxon>Thermotogati</taxon>
        <taxon>Deinococcota</taxon>
        <taxon>Deinococci</taxon>
        <taxon>Thermales</taxon>
        <taxon>Thermaceae</taxon>
        <taxon>Thermus</taxon>
    </lineage>
</organism>
<accession>P21778</accession>
<dbReference type="EC" id="2.7.1.11" evidence="2"/>
<dbReference type="SMR" id="P21778"/>
<dbReference type="UniPathway" id="UPA00109">
    <property type="reaction ID" value="UER00182"/>
</dbReference>
<dbReference type="GO" id="GO:0005737">
    <property type="term" value="C:cytoplasm"/>
    <property type="evidence" value="ECO:0007669"/>
    <property type="project" value="UniProtKB-SubCell"/>
</dbReference>
<dbReference type="GO" id="GO:0003872">
    <property type="term" value="F:6-phosphofructokinase activity"/>
    <property type="evidence" value="ECO:0007669"/>
    <property type="project" value="UniProtKB-EC"/>
</dbReference>
<dbReference type="GO" id="GO:0005524">
    <property type="term" value="F:ATP binding"/>
    <property type="evidence" value="ECO:0007669"/>
    <property type="project" value="UniProtKB-KW"/>
</dbReference>
<dbReference type="GO" id="GO:0046872">
    <property type="term" value="F:metal ion binding"/>
    <property type="evidence" value="ECO:0007669"/>
    <property type="project" value="UniProtKB-KW"/>
</dbReference>
<dbReference type="Gene3D" id="3.40.50.450">
    <property type="match status" value="1"/>
</dbReference>
<dbReference type="InterPro" id="IPR000023">
    <property type="entry name" value="Phosphofructokinase_dom"/>
</dbReference>
<dbReference type="InterPro" id="IPR035966">
    <property type="entry name" value="PKF_sf"/>
</dbReference>
<dbReference type="Pfam" id="PF00365">
    <property type="entry name" value="PFK"/>
    <property type="match status" value="1"/>
</dbReference>
<dbReference type="SUPFAM" id="SSF53784">
    <property type="entry name" value="Phosphofructokinase"/>
    <property type="match status" value="1"/>
</dbReference>
<evidence type="ECO:0000250" key="1">
    <source>
        <dbReference type="UniProtKB" id="P0A796"/>
    </source>
</evidence>
<evidence type="ECO:0000269" key="2">
    <source>
    </source>
</evidence>
<evidence type="ECO:0000305" key="3"/>
<reference key="1">
    <citation type="journal article" date="1991" name="J. Biochem.">
        <title>Phosphoenolpyruvate-insensitive phosphofructokinase isozyme from Thermus thermophilus HB8.</title>
        <authorList>
            <person name="Xu J."/>
            <person name="Oshima T."/>
            <person name="Yoshida M."/>
        </authorList>
    </citation>
    <scope>PROTEIN SEQUENCE</scope>
    <scope>FUNCTION</scope>
    <scope>CATALYTIC ACTIVITY</scope>
    <scope>ACTIVITY REGULATION</scope>
    <scope>SUBUNIT</scope>
</reference>
<name>PFKA2_THET8</name>
<protein>
    <recommendedName>
        <fullName>ATP-dependent 6-phosphofructokinase 2</fullName>
        <shortName>ATP-PFK 2</shortName>
        <shortName>Phosphofructokinase 2</shortName>
        <ecNumber evidence="2">2.7.1.11</ecNumber>
    </recommendedName>
    <alternativeName>
        <fullName>Phosphohexokinase 2</fullName>
    </alternativeName>
</protein>
<gene>
    <name type="primary">pfkA2</name>
</gene>
<proteinExistence type="evidence at protein level"/>
<sequence length="25" mass="2557">MKRIGVLTSGGDSPGMNAAIRAVVR</sequence>
<keyword id="KW-0021">Allosteric enzyme</keyword>
<keyword id="KW-0067">ATP-binding</keyword>
<keyword id="KW-0963">Cytoplasm</keyword>
<keyword id="KW-0903">Direct protein sequencing</keyword>
<keyword id="KW-0324">Glycolysis</keyword>
<keyword id="KW-0418">Kinase</keyword>
<keyword id="KW-0460">Magnesium</keyword>
<keyword id="KW-0479">Metal-binding</keyword>
<keyword id="KW-0547">Nucleotide-binding</keyword>
<keyword id="KW-0808">Transferase</keyword>
<feature type="chain" id="PRO_0000112002" description="ATP-dependent 6-phosphofructokinase 2">
    <location>
        <begin position="1"/>
        <end position="25" status="greater than"/>
    </location>
</feature>
<feature type="binding site" evidence="1">
    <location>
        <position position="11"/>
    </location>
    <ligand>
        <name>ATP</name>
        <dbReference type="ChEBI" id="CHEBI:30616"/>
    </ligand>
</feature>
<feature type="non-terminal residue">
    <location>
        <position position="25"/>
    </location>
</feature>